<reference key="1">
    <citation type="journal article" date="1985" name="Nucleic Acids Res.">
        <title>Structure and function of the region of the replication origin of the Bacillus subtilis chromosome. III. Nucleotide sequence of some 10,000 base pairs in the origin region.</title>
        <authorList>
            <person name="Moriya S."/>
            <person name="Ogasawara N."/>
            <person name="Yoshikawa H."/>
        </authorList>
    </citation>
    <scope>NUCLEOTIDE SEQUENCE [GENOMIC DNA]</scope>
</reference>
<reference key="2">
    <citation type="journal article" date="1994" name="DNA Res.">
        <title>Systematic sequencing of the 180 kilobase region of the Bacillus subtilis chromosome containing the replication origin.</title>
        <authorList>
            <person name="Ogasawara N."/>
            <person name="Nakai S."/>
            <person name="Yoshikawa H."/>
        </authorList>
    </citation>
    <scope>NUCLEOTIDE SEQUENCE [GENOMIC DNA]</scope>
    <source>
        <strain>168</strain>
    </source>
</reference>
<reference key="3">
    <citation type="journal article" date="1997" name="Nature">
        <title>The complete genome sequence of the Gram-positive bacterium Bacillus subtilis.</title>
        <authorList>
            <person name="Kunst F."/>
            <person name="Ogasawara N."/>
            <person name="Moszer I."/>
            <person name="Albertini A.M."/>
            <person name="Alloni G."/>
            <person name="Azevedo V."/>
            <person name="Bertero M.G."/>
            <person name="Bessieres P."/>
            <person name="Bolotin A."/>
            <person name="Borchert S."/>
            <person name="Borriss R."/>
            <person name="Boursier L."/>
            <person name="Brans A."/>
            <person name="Braun M."/>
            <person name="Brignell S.C."/>
            <person name="Bron S."/>
            <person name="Brouillet S."/>
            <person name="Bruschi C.V."/>
            <person name="Caldwell B."/>
            <person name="Capuano V."/>
            <person name="Carter N.M."/>
            <person name="Choi S.-K."/>
            <person name="Codani J.-J."/>
            <person name="Connerton I.F."/>
            <person name="Cummings N.J."/>
            <person name="Daniel R.A."/>
            <person name="Denizot F."/>
            <person name="Devine K.M."/>
            <person name="Duesterhoeft A."/>
            <person name="Ehrlich S.D."/>
            <person name="Emmerson P.T."/>
            <person name="Entian K.-D."/>
            <person name="Errington J."/>
            <person name="Fabret C."/>
            <person name="Ferrari E."/>
            <person name="Foulger D."/>
            <person name="Fritz C."/>
            <person name="Fujita M."/>
            <person name="Fujita Y."/>
            <person name="Fuma S."/>
            <person name="Galizzi A."/>
            <person name="Galleron N."/>
            <person name="Ghim S.-Y."/>
            <person name="Glaser P."/>
            <person name="Goffeau A."/>
            <person name="Golightly E.J."/>
            <person name="Grandi G."/>
            <person name="Guiseppi G."/>
            <person name="Guy B.J."/>
            <person name="Haga K."/>
            <person name="Haiech J."/>
            <person name="Harwood C.R."/>
            <person name="Henaut A."/>
            <person name="Hilbert H."/>
            <person name="Holsappel S."/>
            <person name="Hosono S."/>
            <person name="Hullo M.-F."/>
            <person name="Itaya M."/>
            <person name="Jones L.-M."/>
            <person name="Joris B."/>
            <person name="Karamata D."/>
            <person name="Kasahara Y."/>
            <person name="Klaerr-Blanchard M."/>
            <person name="Klein C."/>
            <person name="Kobayashi Y."/>
            <person name="Koetter P."/>
            <person name="Koningstein G."/>
            <person name="Krogh S."/>
            <person name="Kumano M."/>
            <person name="Kurita K."/>
            <person name="Lapidus A."/>
            <person name="Lardinois S."/>
            <person name="Lauber J."/>
            <person name="Lazarevic V."/>
            <person name="Lee S.-M."/>
            <person name="Levine A."/>
            <person name="Liu H."/>
            <person name="Masuda S."/>
            <person name="Mauel C."/>
            <person name="Medigue C."/>
            <person name="Medina N."/>
            <person name="Mellado R.P."/>
            <person name="Mizuno M."/>
            <person name="Moestl D."/>
            <person name="Nakai S."/>
            <person name="Noback M."/>
            <person name="Noone D."/>
            <person name="O'Reilly M."/>
            <person name="Ogawa K."/>
            <person name="Ogiwara A."/>
            <person name="Oudega B."/>
            <person name="Park S.-H."/>
            <person name="Parro V."/>
            <person name="Pohl T.M."/>
            <person name="Portetelle D."/>
            <person name="Porwollik S."/>
            <person name="Prescott A.M."/>
            <person name="Presecan E."/>
            <person name="Pujic P."/>
            <person name="Purnelle B."/>
            <person name="Rapoport G."/>
            <person name="Rey M."/>
            <person name="Reynolds S."/>
            <person name="Rieger M."/>
            <person name="Rivolta C."/>
            <person name="Rocha E."/>
            <person name="Roche B."/>
            <person name="Rose M."/>
            <person name="Sadaie Y."/>
            <person name="Sato T."/>
            <person name="Scanlan E."/>
            <person name="Schleich S."/>
            <person name="Schroeter R."/>
            <person name="Scoffone F."/>
            <person name="Sekiguchi J."/>
            <person name="Sekowska A."/>
            <person name="Seror S.J."/>
            <person name="Serror P."/>
            <person name="Shin B.-S."/>
            <person name="Soldo B."/>
            <person name="Sorokin A."/>
            <person name="Tacconi E."/>
            <person name="Takagi T."/>
            <person name="Takahashi H."/>
            <person name="Takemaru K."/>
            <person name="Takeuchi M."/>
            <person name="Tamakoshi A."/>
            <person name="Tanaka T."/>
            <person name="Terpstra P."/>
            <person name="Tognoni A."/>
            <person name="Tosato V."/>
            <person name="Uchiyama S."/>
            <person name="Vandenbol M."/>
            <person name="Vannier F."/>
            <person name="Vassarotti A."/>
            <person name="Viari A."/>
            <person name="Wambutt R."/>
            <person name="Wedler E."/>
            <person name="Wedler H."/>
            <person name="Weitzenegger T."/>
            <person name="Winters P."/>
            <person name="Wipat A."/>
            <person name="Yamamoto H."/>
            <person name="Yamane K."/>
            <person name="Yasumoto K."/>
            <person name="Yata K."/>
            <person name="Yoshida K."/>
            <person name="Yoshikawa H.-F."/>
            <person name="Zumstein E."/>
            <person name="Yoshikawa H."/>
            <person name="Danchin A."/>
        </authorList>
    </citation>
    <scope>NUCLEOTIDE SEQUENCE [LARGE SCALE GENOMIC DNA]</scope>
    <source>
        <strain>168</strain>
    </source>
</reference>
<reference key="4">
    <citation type="journal article" date="2004" name="Mol. Microbiol.">
        <title>Visualization of DNA double-strand break repair in live bacteria reveals dynamic recruitment of Bacillus subtilis RecF, RecO and RecN proteins to distinct sites on the nucleoids.</title>
        <authorList>
            <person name="Kidane D."/>
            <person name="Sanchez H."/>
            <person name="Alonso J.C."/>
            <person name="Graumann P.L."/>
        </authorList>
    </citation>
    <scope>FUNCTION</scope>
    <scope>SUBUNIT</scope>
    <scope>SUBCELLULAR LOCATION</scope>
    <scope>TEMPORAL ORDER OF DNA DOUBLE-STRAND BREAK RECRUITMENT</scope>
    <source>
        <strain>168 / YB886 / BG214</strain>
    </source>
</reference>
<reference key="5">
    <citation type="journal article" date="2005" name="J. Cell Biol.">
        <title>Dynamic formation of RecA filaments at DNA double strand break repair centers in live cells.</title>
        <authorList>
            <person name="Kidane D."/>
            <person name="Graumann P.L."/>
        </authorList>
    </citation>
    <scope>RECRUITMENT OF RECA</scope>
    <source>
        <strain>168 / YB886 / BG214</strain>
    </source>
</reference>
<reference key="6">
    <citation type="journal article" date="2020" name="Front. Microbiol.">
        <title>Bacillus subtilis RarA Acts as a Positive RecA Accessory Protein.</title>
        <authorList>
            <person name="Romero H."/>
            <person name="Serrano E."/>
            <person name="Hernandez-Tamayo R."/>
            <person name="Carrasco B."/>
            <person name="Cardenas P.P."/>
            <person name="Ayora S."/>
            <person name="Graumann P.L."/>
            <person name="Alonso J.C."/>
        </authorList>
    </citation>
    <scope>FUNCTION</scope>
    <scope>MUTAGENESIS OF GLU-255</scope>
    <source>
        <strain>168 / YB886 / BG214</strain>
    </source>
</reference>
<keyword id="KW-0067">ATP-binding</keyword>
<keyword id="KW-0963">Cytoplasm</keyword>
<keyword id="KW-0227">DNA damage</keyword>
<keyword id="KW-0234">DNA repair</keyword>
<keyword id="KW-0235">DNA replication</keyword>
<keyword id="KW-0238">DNA-binding</keyword>
<keyword id="KW-0547">Nucleotide-binding</keyword>
<keyword id="KW-1185">Reference proteome</keyword>
<keyword id="KW-0742">SOS response</keyword>
<comment type="function">
    <text evidence="2 3">The RecF protein is involved in DNA metabolism; it is required for DNA replication and normal SOS inducibility. RecF binds preferentially to single-stranded, linear DNA. It also seems to bind ATP. Is recruited to repair centers, foci that are the site of double-strand DNA break(s) after RecN and RecO; recruitment may depend on RecO (PubMed:15186413). A positive modulator of RecA (PubMed:32117122).</text>
</comment>
<comment type="subunit">
    <text evidence="2">Recruited to foci following DNA damage; probably interacts with RecO.</text>
</comment>
<comment type="subcellular location">
    <subcellularLocation>
        <location evidence="2">Cytoplasm</location>
        <location evidence="2">Nucleoid</location>
    </subcellularLocation>
    <text evidence="2">Cytoplasmically located in untreated cells. Recruited to foci following treatment with DNA damaging agents; these foci are presumably the breaks themselves. They are almost always located within nucleoids (PubMed:15186413).</text>
</comment>
<comment type="similarity">
    <text evidence="5">Belongs to the RecF family.</text>
</comment>
<comment type="sequence caution" evidence="5">
    <conflict type="erroneous initiation">
        <sequence resource="EMBL-CDS" id="CAA26220"/>
    </conflict>
    <text>Truncated N-terminus.</text>
</comment>
<gene>
    <name evidence="4" type="primary">recF</name>
    <name type="ordered locus">BSU00040</name>
</gene>
<proteinExistence type="evidence at protein level"/>
<protein>
    <recommendedName>
        <fullName>DNA replication and repair protein RecF</fullName>
    </recommendedName>
</protein>
<accession>P05651</accession>
<name>RECF_BACSU</name>
<evidence type="ECO:0000255" key="1"/>
<evidence type="ECO:0000269" key="2">
    <source>
    </source>
</evidence>
<evidence type="ECO:0000269" key="3">
    <source>
    </source>
</evidence>
<evidence type="ECO:0000303" key="4">
    <source>
    </source>
</evidence>
<evidence type="ECO:0000305" key="5"/>
<feature type="chain" id="PRO_0000196398" description="DNA replication and repair protein RecF">
    <location>
        <begin position="1"/>
        <end position="370"/>
    </location>
</feature>
<feature type="binding site" evidence="1">
    <location>
        <begin position="30"/>
        <end position="37"/>
    </location>
    <ligand>
        <name>ATP</name>
        <dbReference type="ChEBI" id="CHEBI:30616"/>
    </ligand>
</feature>
<feature type="mutagenesis site" description="In recF15; protein is inactive, increases sensitivity to DNA damaging agents, moderate induction of RecA following DNA damage, in a recF15-rarA deletion RecA is not induced by DNA damage." evidence="3">
    <original>E</original>
    <variation>K</variation>
    <location>
        <position position="255"/>
    </location>
</feature>
<organism>
    <name type="scientific">Bacillus subtilis (strain 168)</name>
    <dbReference type="NCBI Taxonomy" id="224308"/>
    <lineage>
        <taxon>Bacteria</taxon>
        <taxon>Bacillati</taxon>
        <taxon>Bacillota</taxon>
        <taxon>Bacilli</taxon>
        <taxon>Bacillales</taxon>
        <taxon>Bacillaceae</taxon>
        <taxon>Bacillus</taxon>
    </lineage>
</organism>
<sequence length="370" mass="42304">MYIQNLELTSYRNYDHAELQFENKVNVIIGENAQGKTNLMEAIYVLSMAKSHRTSNDKELIRWDKDYAKIEGRVMKQNGAIPMQLVISKKGKKGKVNHIEQQKLSQYVGALNTIMFAPEDLNLVKGSPQVRRRFLDMEIGQVSPVYLHDLSLYQKILSQRNHFLKQLQTRKQTDRTMLDVLTDQLVEVAAKVVVKRLQFTAQLEKWAQPIHAGISRGLEELTLKYHTALDVSDPLDLSKIGDSYQEAFSKLREKEIERGVTLSGPHRDDVLFYVNGRDVQTYGSQGQQRTTALSLKLAEIDLIHEEIGEYPILLLDDVLSELDDYRQSHLLHTIQGRVQTFVTTTSVDGIDHETLRQAGMFRVQNGALVK</sequence>
<dbReference type="EMBL" id="X02369">
    <property type="protein sequence ID" value="CAA26220.1"/>
    <property type="status" value="ALT_INIT"/>
    <property type="molecule type" value="Genomic_DNA"/>
</dbReference>
<dbReference type="EMBL" id="D26185">
    <property type="protein sequence ID" value="BAA05240.1"/>
    <property type="molecule type" value="Genomic_DNA"/>
</dbReference>
<dbReference type="EMBL" id="AL009126">
    <property type="protein sequence ID" value="CAB11780.1"/>
    <property type="molecule type" value="Genomic_DNA"/>
</dbReference>
<dbReference type="PIR" id="D22930">
    <property type="entry name" value="D22930"/>
</dbReference>
<dbReference type="RefSeq" id="NP_387885.1">
    <property type="nucleotide sequence ID" value="NC_000964.3"/>
</dbReference>
<dbReference type="RefSeq" id="WP_003243515.1">
    <property type="nucleotide sequence ID" value="NZ_OZ025638.1"/>
</dbReference>
<dbReference type="SMR" id="P05651"/>
<dbReference type="FunCoup" id="P05651">
    <property type="interactions" value="269"/>
</dbReference>
<dbReference type="IntAct" id="P05651">
    <property type="interactions" value="2"/>
</dbReference>
<dbReference type="STRING" id="224308.BSU00040"/>
<dbReference type="PaxDb" id="224308-BSU00040"/>
<dbReference type="DNASU" id="939454"/>
<dbReference type="EnsemblBacteria" id="CAB11780">
    <property type="protein sequence ID" value="CAB11780"/>
    <property type="gene ID" value="BSU_00040"/>
</dbReference>
<dbReference type="GeneID" id="939454"/>
<dbReference type="KEGG" id="bsu:BSU00040"/>
<dbReference type="PATRIC" id="fig|224308.179.peg.4"/>
<dbReference type="eggNOG" id="COG1195">
    <property type="taxonomic scope" value="Bacteria"/>
</dbReference>
<dbReference type="InParanoid" id="P05651"/>
<dbReference type="OrthoDB" id="9803889at2"/>
<dbReference type="PhylomeDB" id="P05651"/>
<dbReference type="BioCyc" id="BSUB:BSU00040-MONOMER"/>
<dbReference type="Proteomes" id="UP000001570">
    <property type="component" value="Chromosome"/>
</dbReference>
<dbReference type="GO" id="GO:0043590">
    <property type="term" value="C:bacterial nucleoid"/>
    <property type="evidence" value="ECO:0000314"/>
    <property type="project" value="UniProtKB"/>
</dbReference>
<dbReference type="GO" id="GO:0005737">
    <property type="term" value="C:cytoplasm"/>
    <property type="evidence" value="ECO:0007669"/>
    <property type="project" value="UniProtKB-UniRule"/>
</dbReference>
<dbReference type="GO" id="GO:0005524">
    <property type="term" value="F:ATP binding"/>
    <property type="evidence" value="ECO:0007669"/>
    <property type="project" value="UniProtKB-UniRule"/>
</dbReference>
<dbReference type="GO" id="GO:0003697">
    <property type="term" value="F:single-stranded DNA binding"/>
    <property type="evidence" value="ECO:0007669"/>
    <property type="project" value="UniProtKB-UniRule"/>
</dbReference>
<dbReference type="GO" id="GO:0006260">
    <property type="term" value="P:DNA replication"/>
    <property type="evidence" value="ECO:0007669"/>
    <property type="project" value="UniProtKB-UniRule"/>
</dbReference>
<dbReference type="GO" id="GO:0000731">
    <property type="term" value="P:DNA synthesis involved in DNA repair"/>
    <property type="evidence" value="ECO:0000318"/>
    <property type="project" value="GO_Central"/>
</dbReference>
<dbReference type="GO" id="GO:0006302">
    <property type="term" value="P:double-strand break repair"/>
    <property type="evidence" value="ECO:0000315"/>
    <property type="project" value="UniProtKB"/>
</dbReference>
<dbReference type="GO" id="GO:0009432">
    <property type="term" value="P:SOS response"/>
    <property type="evidence" value="ECO:0007669"/>
    <property type="project" value="UniProtKB-UniRule"/>
</dbReference>
<dbReference type="CDD" id="cd03242">
    <property type="entry name" value="ABC_RecF"/>
    <property type="match status" value="1"/>
</dbReference>
<dbReference type="FunFam" id="1.20.1050.90:FF:000002">
    <property type="entry name" value="DNA replication and repair protein RecF"/>
    <property type="match status" value="1"/>
</dbReference>
<dbReference type="Gene3D" id="3.40.50.300">
    <property type="entry name" value="P-loop containing nucleotide triphosphate hydrolases"/>
    <property type="match status" value="1"/>
</dbReference>
<dbReference type="Gene3D" id="1.20.1050.90">
    <property type="entry name" value="RecF/RecN/SMC, N-terminal domain"/>
    <property type="match status" value="1"/>
</dbReference>
<dbReference type="HAMAP" id="MF_00365">
    <property type="entry name" value="RecF"/>
    <property type="match status" value="1"/>
</dbReference>
<dbReference type="InterPro" id="IPR001238">
    <property type="entry name" value="DNA-binding_RecF"/>
</dbReference>
<dbReference type="InterPro" id="IPR018078">
    <property type="entry name" value="DNA-binding_RecF_CS"/>
</dbReference>
<dbReference type="InterPro" id="IPR027417">
    <property type="entry name" value="P-loop_NTPase"/>
</dbReference>
<dbReference type="InterPro" id="IPR003395">
    <property type="entry name" value="RecF/RecN/SMC_N"/>
</dbReference>
<dbReference type="InterPro" id="IPR042174">
    <property type="entry name" value="RecF_2"/>
</dbReference>
<dbReference type="NCBIfam" id="TIGR00611">
    <property type="entry name" value="recf"/>
    <property type="match status" value="1"/>
</dbReference>
<dbReference type="PANTHER" id="PTHR32182">
    <property type="entry name" value="DNA REPLICATION AND REPAIR PROTEIN RECF"/>
    <property type="match status" value="1"/>
</dbReference>
<dbReference type="PANTHER" id="PTHR32182:SF0">
    <property type="entry name" value="DNA REPLICATION AND REPAIR PROTEIN RECF"/>
    <property type="match status" value="1"/>
</dbReference>
<dbReference type="Pfam" id="PF02463">
    <property type="entry name" value="SMC_N"/>
    <property type="match status" value="1"/>
</dbReference>
<dbReference type="SUPFAM" id="SSF52540">
    <property type="entry name" value="P-loop containing nucleoside triphosphate hydrolases"/>
    <property type="match status" value="1"/>
</dbReference>
<dbReference type="PROSITE" id="PS00617">
    <property type="entry name" value="RECF_1"/>
    <property type="match status" value="1"/>
</dbReference>
<dbReference type="PROSITE" id="PS00618">
    <property type="entry name" value="RECF_2"/>
    <property type="match status" value="1"/>
</dbReference>